<protein>
    <recommendedName>
        <fullName evidence="1">Orotidine 5'-phosphate decarboxylase</fullName>
        <ecNumber evidence="1">4.1.1.23</ecNumber>
    </recommendedName>
    <alternativeName>
        <fullName evidence="1">OMP decarboxylase</fullName>
        <shortName evidence="1">OMPDCase</shortName>
        <shortName evidence="1">OMPdecase</shortName>
    </alternativeName>
</protein>
<proteinExistence type="inferred from homology"/>
<reference key="1">
    <citation type="journal article" date="2005" name="J. Bacteriol.">
        <title>Insights into genome plasticity and pathogenicity of the plant pathogenic Bacterium Xanthomonas campestris pv. vesicatoria revealed by the complete genome sequence.</title>
        <authorList>
            <person name="Thieme F."/>
            <person name="Koebnik R."/>
            <person name="Bekel T."/>
            <person name="Berger C."/>
            <person name="Boch J."/>
            <person name="Buettner D."/>
            <person name="Caldana C."/>
            <person name="Gaigalat L."/>
            <person name="Goesmann A."/>
            <person name="Kay S."/>
            <person name="Kirchner O."/>
            <person name="Lanz C."/>
            <person name="Linke B."/>
            <person name="McHardy A.C."/>
            <person name="Meyer F."/>
            <person name="Mittenhuber G."/>
            <person name="Nies D.H."/>
            <person name="Niesbach-Kloesgen U."/>
            <person name="Patschkowski T."/>
            <person name="Rueckert C."/>
            <person name="Rupp O."/>
            <person name="Schneiker S."/>
            <person name="Schuster S.C."/>
            <person name="Vorhoelter F.J."/>
            <person name="Weber E."/>
            <person name="Puehler A."/>
            <person name="Bonas U."/>
            <person name="Bartels D."/>
            <person name="Kaiser O."/>
        </authorList>
    </citation>
    <scope>NUCLEOTIDE SEQUENCE [LARGE SCALE GENOMIC DNA]</scope>
    <source>
        <strain>85-10</strain>
    </source>
</reference>
<comment type="function">
    <text evidence="1">Catalyzes the decarboxylation of orotidine 5'-monophosphate (OMP) to uridine 5'-monophosphate (UMP).</text>
</comment>
<comment type="catalytic activity">
    <reaction evidence="1">
        <text>orotidine 5'-phosphate + H(+) = UMP + CO2</text>
        <dbReference type="Rhea" id="RHEA:11596"/>
        <dbReference type="ChEBI" id="CHEBI:15378"/>
        <dbReference type="ChEBI" id="CHEBI:16526"/>
        <dbReference type="ChEBI" id="CHEBI:57538"/>
        <dbReference type="ChEBI" id="CHEBI:57865"/>
        <dbReference type="EC" id="4.1.1.23"/>
    </reaction>
</comment>
<comment type="pathway">
    <text evidence="1">Pyrimidine metabolism; UMP biosynthesis via de novo pathway; UMP from orotate: step 2/2.</text>
</comment>
<comment type="subunit">
    <text evidence="1">Homodimer.</text>
</comment>
<comment type="similarity">
    <text evidence="1">Belongs to the OMP decarboxylase family. Type 1 subfamily.</text>
</comment>
<accession>Q3BMA4</accession>
<gene>
    <name evidence="1" type="primary">pyrF</name>
    <name type="ordered locus">XCV4378</name>
</gene>
<feature type="chain" id="PRO_0000241931" description="Orotidine 5'-phosphate decarboxylase">
    <location>
        <begin position="1"/>
        <end position="243"/>
    </location>
</feature>
<feature type="active site" description="Proton donor" evidence="1">
    <location>
        <position position="71"/>
    </location>
</feature>
<feature type="binding site" evidence="1">
    <location>
        <position position="19"/>
    </location>
    <ligand>
        <name>substrate</name>
    </ligand>
</feature>
<feature type="binding site" evidence="1">
    <location>
        <position position="41"/>
    </location>
    <ligand>
        <name>substrate</name>
    </ligand>
</feature>
<feature type="binding site" evidence="1">
    <location>
        <begin position="69"/>
        <end position="78"/>
    </location>
    <ligand>
        <name>substrate</name>
    </ligand>
</feature>
<feature type="binding site" evidence="1">
    <location>
        <position position="124"/>
    </location>
    <ligand>
        <name>substrate</name>
    </ligand>
</feature>
<feature type="binding site" evidence="1">
    <location>
        <position position="185"/>
    </location>
    <ligand>
        <name>substrate</name>
    </ligand>
</feature>
<feature type="binding site" evidence="1">
    <location>
        <position position="194"/>
    </location>
    <ligand>
        <name>substrate</name>
    </ligand>
</feature>
<feature type="binding site" evidence="1">
    <location>
        <position position="214"/>
    </location>
    <ligand>
        <name>substrate</name>
    </ligand>
</feature>
<feature type="binding site" evidence="1">
    <location>
        <position position="215"/>
    </location>
    <ligand>
        <name>substrate</name>
    </ligand>
</feature>
<keyword id="KW-0210">Decarboxylase</keyword>
<keyword id="KW-0456">Lyase</keyword>
<keyword id="KW-0665">Pyrimidine biosynthesis</keyword>
<name>PYRF_XANE5</name>
<organism>
    <name type="scientific">Xanthomonas euvesicatoria pv. vesicatoria (strain 85-10)</name>
    <name type="common">Xanthomonas campestris pv. vesicatoria</name>
    <dbReference type="NCBI Taxonomy" id="316273"/>
    <lineage>
        <taxon>Bacteria</taxon>
        <taxon>Pseudomonadati</taxon>
        <taxon>Pseudomonadota</taxon>
        <taxon>Gammaproteobacteria</taxon>
        <taxon>Lysobacterales</taxon>
        <taxon>Lysobacteraceae</taxon>
        <taxon>Xanthomonas</taxon>
    </lineage>
</organism>
<dbReference type="EC" id="4.1.1.23" evidence="1"/>
<dbReference type="EMBL" id="AM039952">
    <property type="protein sequence ID" value="CAJ26109.1"/>
    <property type="molecule type" value="Genomic_DNA"/>
</dbReference>
<dbReference type="RefSeq" id="WP_011349125.1">
    <property type="nucleotide sequence ID" value="NZ_CP017190.1"/>
</dbReference>
<dbReference type="SMR" id="Q3BMA4"/>
<dbReference type="STRING" id="456327.BJD11_23520"/>
<dbReference type="KEGG" id="xcv:XCV4378"/>
<dbReference type="eggNOG" id="COG0284">
    <property type="taxonomic scope" value="Bacteria"/>
</dbReference>
<dbReference type="HOGENOM" id="CLU_067069_1_0_6"/>
<dbReference type="UniPathway" id="UPA00070">
    <property type="reaction ID" value="UER00120"/>
</dbReference>
<dbReference type="Proteomes" id="UP000007069">
    <property type="component" value="Chromosome"/>
</dbReference>
<dbReference type="GO" id="GO:0005829">
    <property type="term" value="C:cytosol"/>
    <property type="evidence" value="ECO:0007669"/>
    <property type="project" value="TreeGrafter"/>
</dbReference>
<dbReference type="GO" id="GO:0004590">
    <property type="term" value="F:orotidine-5'-phosphate decarboxylase activity"/>
    <property type="evidence" value="ECO:0007669"/>
    <property type="project" value="UniProtKB-UniRule"/>
</dbReference>
<dbReference type="GO" id="GO:0006207">
    <property type="term" value="P:'de novo' pyrimidine nucleobase biosynthetic process"/>
    <property type="evidence" value="ECO:0007669"/>
    <property type="project" value="InterPro"/>
</dbReference>
<dbReference type="GO" id="GO:0044205">
    <property type="term" value="P:'de novo' UMP biosynthetic process"/>
    <property type="evidence" value="ECO:0007669"/>
    <property type="project" value="UniProtKB-UniRule"/>
</dbReference>
<dbReference type="CDD" id="cd04725">
    <property type="entry name" value="OMP_decarboxylase_like"/>
    <property type="match status" value="1"/>
</dbReference>
<dbReference type="FunFam" id="3.20.20.70:FF:000235">
    <property type="entry name" value="Orotidine 5'-phosphate decarboxylase"/>
    <property type="match status" value="1"/>
</dbReference>
<dbReference type="Gene3D" id="3.20.20.70">
    <property type="entry name" value="Aldolase class I"/>
    <property type="match status" value="1"/>
</dbReference>
<dbReference type="HAMAP" id="MF_01200_B">
    <property type="entry name" value="OMPdecase_type1_B"/>
    <property type="match status" value="1"/>
</dbReference>
<dbReference type="InterPro" id="IPR013785">
    <property type="entry name" value="Aldolase_TIM"/>
</dbReference>
<dbReference type="InterPro" id="IPR014732">
    <property type="entry name" value="OMPdecase"/>
</dbReference>
<dbReference type="InterPro" id="IPR018089">
    <property type="entry name" value="OMPdecase_AS"/>
</dbReference>
<dbReference type="InterPro" id="IPR047596">
    <property type="entry name" value="OMPdecase_bac"/>
</dbReference>
<dbReference type="InterPro" id="IPR001754">
    <property type="entry name" value="OMPdeCOase_dom"/>
</dbReference>
<dbReference type="InterPro" id="IPR011060">
    <property type="entry name" value="RibuloseP-bd_barrel"/>
</dbReference>
<dbReference type="NCBIfam" id="NF001273">
    <property type="entry name" value="PRK00230.1"/>
    <property type="match status" value="1"/>
</dbReference>
<dbReference type="NCBIfam" id="TIGR01740">
    <property type="entry name" value="pyrF"/>
    <property type="match status" value="1"/>
</dbReference>
<dbReference type="PANTHER" id="PTHR32119">
    <property type="entry name" value="OROTIDINE 5'-PHOSPHATE DECARBOXYLASE"/>
    <property type="match status" value="1"/>
</dbReference>
<dbReference type="PANTHER" id="PTHR32119:SF2">
    <property type="entry name" value="OROTIDINE 5'-PHOSPHATE DECARBOXYLASE"/>
    <property type="match status" value="1"/>
</dbReference>
<dbReference type="Pfam" id="PF00215">
    <property type="entry name" value="OMPdecase"/>
    <property type="match status" value="1"/>
</dbReference>
<dbReference type="SMART" id="SM00934">
    <property type="entry name" value="OMPdecase"/>
    <property type="match status" value="1"/>
</dbReference>
<dbReference type="SUPFAM" id="SSF51366">
    <property type="entry name" value="Ribulose-phoshate binding barrel"/>
    <property type="match status" value="1"/>
</dbReference>
<dbReference type="PROSITE" id="PS00156">
    <property type="entry name" value="OMPDECASE"/>
    <property type="match status" value="1"/>
</dbReference>
<sequence length="243" mass="25692">MSRAPLPLAAHERLIFALDVPGHDEAIAWVDRLGDSVSFYKIGMELLASGEYFHVLDALAKRDKRVFVDLKFFDIPATVAGTIRRLAQWPVSYCTVHGWHAGMLQAAAEANHGDMRLLAVTVLTSMGRPDLAAMGIDREPVDVVVERALAAQAAGIDGVIASGQEAGPIRRATGPDFSIVCPGIRPGGPVGDDQQRTVGVAQAFTDGADAIVVGRPIRQASDPAAAATAIQDEIRAALPQNGN</sequence>
<evidence type="ECO:0000255" key="1">
    <source>
        <dbReference type="HAMAP-Rule" id="MF_01200"/>
    </source>
</evidence>